<reference key="1">
    <citation type="journal article" date="2004" name="PLoS Biol.">
        <title>Genomic insights into methanotrophy: the complete genome sequence of Methylococcus capsulatus (Bath).</title>
        <authorList>
            <person name="Ward N.L."/>
            <person name="Larsen O."/>
            <person name="Sakwa J."/>
            <person name="Bruseth L."/>
            <person name="Khouri H.M."/>
            <person name="Durkin A.S."/>
            <person name="Dimitrov G."/>
            <person name="Jiang L."/>
            <person name="Scanlan D."/>
            <person name="Kang K.H."/>
            <person name="Lewis M.R."/>
            <person name="Nelson K.E."/>
            <person name="Methe B.A."/>
            <person name="Wu M."/>
            <person name="Heidelberg J.F."/>
            <person name="Paulsen I.T."/>
            <person name="Fouts D.E."/>
            <person name="Ravel J."/>
            <person name="Tettelin H."/>
            <person name="Ren Q."/>
            <person name="Read T.D."/>
            <person name="DeBoy R.T."/>
            <person name="Seshadri R."/>
            <person name="Salzberg S.L."/>
            <person name="Jensen H.B."/>
            <person name="Birkeland N.K."/>
            <person name="Nelson W.C."/>
            <person name="Dodson R.J."/>
            <person name="Grindhaug S.H."/>
            <person name="Holt I.E."/>
            <person name="Eidhammer I."/>
            <person name="Jonasen I."/>
            <person name="Vanaken S."/>
            <person name="Utterback T.R."/>
            <person name="Feldblyum T.V."/>
            <person name="Fraser C.M."/>
            <person name="Lillehaug J.R."/>
            <person name="Eisen J.A."/>
        </authorList>
    </citation>
    <scope>NUCLEOTIDE SEQUENCE [LARGE SCALE GENOMIC DNA]</scope>
    <source>
        <strain>ATCC 33009 / NCIMB 11132 / Bath</strain>
    </source>
</reference>
<accession>Q604Z9</accession>
<proteinExistence type="inferred from homology"/>
<organism>
    <name type="scientific">Methylococcus capsulatus (strain ATCC 33009 / NCIMB 11132 / Bath)</name>
    <dbReference type="NCBI Taxonomy" id="243233"/>
    <lineage>
        <taxon>Bacteria</taxon>
        <taxon>Pseudomonadati</taxon>
        <taxon>Pseudomonadota</taxon>
        <taxon>Gammaproteobacteria</taxon>
        <taxon>Methylococcales</taxon>
        <taxon>Methylococcaceae</taxon>
        <taxon>Methylococcus</taxon>
    </lineage>
</organism>
<feature type="chain" id="PRO_1000060200" description="Na(+)-translocating NADH-quinone reductase subunit E">
    <location>
        <begin position="1"/>
        <end position="202"/>
    </location>
</feature>
<feature type="transmembrane region" description="Helical" evidence="1">
    <location>
        <begin position="11"/>
        <end position="31"/>
    </location>
</feature>
<feature type="transmembrane region" description="Helical" evidence="1">
    <location>
        <begin position="35"/>
        <end position="55"/>
    </location>
</feature>
<feature type="transmembrane region" description="Helical" evidence="1">
    <location>
        <begin position="81"/>
        <end position="101"/>
    </location>
</feature>
<feature type="transmembrane region" description="Helical" evidence="1">
    <location>
        <begin position="114"/>
        <end position="134"/>
    </location>
</feature>
<feature type="transmembrane region" description="Helical" evidence="1">
    <location>
        <begin position="144"/>
        <end position="164"/>
    </location>
</feature>
<feature type="transmembrane region" description="Helical" evidence="1">
    <location>
        <begin position="180"/>
        <end position="200"/>
    </location>
</feature>
<dbReference type="EC" id="7.2.1.1" evidence="1"/>
<dbReference type="EMBL" id="AE017282">
    <property type="protein sequence ID" value="AAU91561.1"/>
    <property type="molecule type" value="Genomic_DNA"/>
</dbReference>
<dbReference type="RefSeq" id="WP_010961612.1">
    <property type="nucleotide sequence ID" value="NC_002977.6"/>
</dbReference>
<dbReference type="SMR" id="Q604Z9"/>
<dbReference type="STRING" id="243233.MCA2385"/>
<dbReference type="GeneID" id="88224589"/>
<dbReference type="KEGG" id="mca:MCA2385"/>
<dbReference type="eggNOG" id="COG2209">
    <property type="taxonomic scope" value="Bacteria"/>
</dbReference>
<dbReference type="HOGENOM" id="CLU_095255_0_0_6"/>
<dbReference type="Proteomes" id="UP000006821">
    <property type="component" value="Chromosome"/>
</dbReference>
<dbReference type="GO" id="GO:0009276">
    <property type="term" value="C:Gram-negative-bacterium-type cell wall"/>
    <property type="evidence" value="ECO:0007669"/>
    <property type="project" value="InterPro"/>
</dbReference>
<dbReference type="GO" id="GO:0005886">
    <property type="term" value="C:plasma membrane"/>
    <property type="evidence" value="ECO:0007669"/>
    <property type="project" value="UniProtKB-SubCell"/>
</dbReference>
<dbReference type="GO" id="GO:0016655">
    <property type="term" value="F:oxidoreductase activity, acting on NAD(P)H, quinone or similar compound as acceptor"/>
    <property type="evidence" value="ECO:0007669"/>
    <property type="project" value="UniProtKB-UniRule"/>
</dbReference>
<dbReference type="GO" id="GO:0022904">
    <property type="term" value="P:respiratory electron transport chain"/>
    <property type="evidence" value="ECO:0007669"/>
    <property type="project" value="InterPro"/>
</dbReference>
<dbReference type="GO" id="GO:0006814">
    <property type="term" value="P:sodium ion transport"/>
    <property type="evidence" value="ECO:0007669"/>
    <property type="project" value="UniProtKB-UniRule"/>
</dbReference>
<dbReference type="HAMAP" id="MF_00429">
    <property type="entry name" value="NqrE"/>
    <property type="match status" value="1"/>
</dbReference>
<dbReference type="InterPro" id="IPR003667">
    <property type="entry name" value="NqrDE/RnfAE"/>
</dbReference>
<dbReference type="InterPro" id="IPR050133">
    <property type="entry name" value="NqrDE/RnfAE_oxidrdctase"/>
</dbReference>
<dbReference type="InterPro" id="IPR010967">
    <property type="entry name" value="NqrE"/>
</dbReference>
<dbReference type="NCBIfam" id="TIGR01940">
    <property type="entry name" value="nqrE"/>
    <property type="match status" value="1"/>
</dbReference>
<dbReference type="PANTHER" id="PTHR30335">
    <property type="entry name" value="INTEGRAL MEMBRANE PROTEIN OF SOXR-REDUCING COMPLEX"/>
    <property type="match status" value="1"/>
</dbReference>
<dbReference type="PANTHER" id="PTHR30335:SF1">
    <property type="entry name" value="NA(+)-TRANSLOCATING NADH-QUINONE REDUCTASE SUBUNIT E"/>
    <property type="match status" value="1"/>
</dbReference>
<dbReference type="Pfam" id="PF02508">
    <property type="entry name" value="Rnf-Nqr"/>
    <property type="match status" value="1"/>
</dbReference>
<dbReference type="PIRSF" id="PIRSF006102">
    <property type="entry name" value="NQR_DE"/>
    <property type="match status" value="1"/>
</dbReference>
<gene>
    <name evidence="1" type="primary">nqrE</name>
    <name type="ordered locus">MCA2385</name>
</gene>
<name>NQRE_METCA</name>
<evidence type="ECO:0000255" key="1">
    <source>
        <dbReference type="HAMAP-Rule" id="MF_00429"/>
    </source>
</evidence>
<keyword id="KW-0997">Cell inner membrane</keyword>
<keyword id="KW-1003">Cell membrane</keyword>
<keyword id="KW-0406">Ion transport</keyword>
<keyword id="KW-0472">Membrane</keyword>
<keyword id="KW-0520">NAD</keyword>
<keyword id="KW-1185">Reference proteome</keyword>
<keyword id="KW-0915">Sodium</keyword>
<keyword id="KW-0739">Sodium transport</keyword>
<keyword id="KW-1278">Translocase</keyword>
<keyword id="KW-0812">Transmembrane</keyword>
<keyword id="KW-1133">Transmembrane helix</keyword>
<keyword id="KW-0813">Transport</keyword>
<keyword id="KW-0830">Ubiquinone</keyword>
<sequence length="202" mass="21692">MEAYINLFIKSVFIENMALSFFLGMCTFIAVSKKIETAVGLGIAVVIVQTLTVPANNLIYTYLLKEGALSWAGLHDVDLSFIALMACIGVIAAMVQILEMVLDKFFPALYNALGIFLPLITVNCAILAGSLFMIERDYNFSESVVYGVGSGFGWALAITAMAGVREKLKYSDVPAGLRGLGITFISAGLMALGFMAFSGIQL</sequence>
<protein>
    <recommendedName>
        <fullName evidence="1">Na(+)-translocating NADH-quinone reductase subunit E</fullName>
        <shortName evidence="1">Na(+)-NQR subunit E</shortName>
        <shortName evidence="1">Na(+)-translocating NQR subunit E</shortName>
        <ecNumber evidence="1">7.2.1.1</ecNumber>
    </recommendedName>
    <alternativeName>
        <fullName evidence="1">NQR complex subunit E</fullName>
    </alternativeName>
    <alternativeName>
        <fullName evidence="1">NQR-1 subunit E</fullName>
    </alternativeName>
</protein>
<comment type="function">
    <text evidence="1">NQR complex catalyzes the reduction of ubiquinone-1 to ubiquinol by two successive reactions, coupled with the transport of Na(+) ions from the cytoplasm to the periplasm. NqrA to NqrE are probably involved in the second step, the conversion of ubisemiquinone to ubiquinol.</text>
</comment>
<comment type="catalytic activity">
    <reaction evidence="1">
        <text>a ubiquinone + n Na(+)(in) + NADH + H(+) = a ubiquinol + n Na(+)(out) + NAD(+)</text>
        <dbReference type="Rhea" id="RHEA:47748"/>
        <dbReference type="Rhea" id="RHEA-COMP:9565"/>
        <dbReference type="Rhea" id="RHEA-COMP:9566"/>
        <dbReference type="ChEBI" id="CHEBI:15378"/>
        <dbReference type="ChEBI" id="CHEBI:16389"/>
        <dbReference type="ChEBI" id="CHEBI:17976"/>
        <dbReference type="ChEBI" id="CHEBI:29101"/>
        <dbReference type="ChEBI" id="CHEBI:57540"/>
        <dbReference type="ChEBI" id="CHEBI:57945"/>
        <dbReference type="EC" id="7.2.1.1"/>
    </reaction>
</comment>
<comment type="subunit">
    <text evidence="1">Composed of six subunits; NqrA, NqrB, NqrC, NqrD, NqrE and NqrF.</text>
</comment>
<comment type="subcellular location">
    <subcellularLocation>
        <location evidence="1">Cell inner membrane</location>
        <topology evidence="1">Multi-pass membrane protein</topology>
    </subcellularLocation>
</comment>
<comment type="similarity">
    <text evidence="1">Belongs to the NqrDE/RnfAE family.</text>
</comment>